<sequence>MVFSLYKNIYKFVNLLKIWIINLKVIIKIIISEIIVLIGNTIHDNQKIDGITFVKNEFIISSIFYFFFLFKIIYTERKP</sequence>
<comment type="subcellular location">
    <subcellularLocation>
        <location evidence="2">Host membrane</location>
        <topology evidence="2">Multi-pass membrane protein</topology>
    </subcellularLocation>
</comment>
<organism>
    <name type="scientific">Spiroplasma virus SpV1-R8A2 B</name>
    <name type="common">SpV1</name>
    <name type="synonym">Spiroplasma virus 1</name>
    <dbReference type="NCBI Taxonomy" id="10854"/>
    <lineage>
        <taxon>Viruses</taxon>
        <taxon>Monodnaviria</taxon>
        <taxon>Loebvirae</taxon>
        <taxon>Hofneiviricota</taxon>
        <taxon>Faserviricetes</taxon>
        <taxon>Tubulavirales</taxon>
        <taxon>Plectroviridae</taxon>
        <taxon>Vespertiliovirus</taxon>
        <taxon>Vespertiliovirus R8A2B</taxon>
    </lineage>
</organism>
<evidence type="ECO:0000255" key="1"/>
<evidence type="ECO:0000305" key="2"/>
<keyword id="KW-1043">Host membrane</keyword>
<keyword id="KW-0472">Membrane</keyword>
<keyword id="KW-1185">Reference proteome</keyword>
<keyword id="KW-0812">Transmembrane</keyword>
<keyword id="KW-1133">Transmembrane helix</keyword>
<feature type="chain" id="PRO_0000065803" description="Uncharacterized protein ORF8">
    <location>
        <begin position="1"/>
        <end position="79"/>
    </location>
</feature>
<feature type="transmembrane region" description="Helical" evidence="1">
    <location>
        <begin position="18"/>
        <end position="38"/>
    </location>
</feature>
<feature type="transmembrane region" description="Helical" evidence="1">
    <location>
        <begin position="50"/>
        <end position="70"/>
    </location>
</feature>
<name>ORF8_SPV1R</name>
<organismHost>
    <name type="scientific">Spiroplasma citri</name>
    <dbReference type="NCBI Taxonomy" id="2133"/>
</organismHost>
<reference key="1">
    <citation type="journal article" date="1990" name="Nucleic Acids Res.">
        <title>Complete nucleotide sequence of the genome of Spiroplasma citri virus SpV1-R8A2 B.</title>
        <authorList>
            <person name="Renaudin J."/>
            <person name="Aullo P."/>
            <person name="Vignault J.C."/>
            <person name="Bove J.M."/>
        </authorList>
    </citation>
    <scope>NUCLEOTIDE SEQUENCE [GENOMIC DNA]</scope>
</reference>
<gene>
    <name type="ORF">ORF8</name>
</gene>
<accession>P15899</accession>
<proteinExistence type="predicted"/>
<protein>
    <recommendedName>
        <fullName>Uncharacterized protein ORF8</fullName>
    </recommendedName>
    <alternativeName>
        <fullName>Gene 8 protein</fullName>
    </alternativeName>
</protein>
<dbReference type="EMBL" id="X51344">
    <property type="protein sequence ID" value="CAA35732.1"/>
    <property type="molecule type" value="Genomic_DNA"/>
</dbReference>
<dbReference type="RefSeq" id="NP_040344.1">
    <property type="nucleotide sequence ID" value="NC_001365.1"/>
</dbReference>
<dbReference type="SMR" id="P15899"/>
<dbReference type="KEGG" id="vg:1260867"/>
<dbReference type="Proteomes" id="UP000001252">
    <property type="component" value="Segment"/>
</dbReference>
<dbReference type="GO" id="GO:0033644">
    <property type="term" value="C:host cell membrane"/>
    <property type="evidence" value="ECO:0007669"/>
    <property type="project" value="UniProtKB-SubCell"/>
</dbReference>
<dbReference type="GO" id="GO:0016020">
    <property type="term" value="C:membrane"/>
    <property type="evidence" value="ECO:0007669"/>
    <property type="project" value="UniProtKB-KW"/>
</dbReference>